<proteinExistence type="evidence at transcript level"/>
<protein>
    <recommendedName>
        <fullName>Fc receptor-like A</fullName>
    </recommendedName>
    <alternativeName>
        <fullName>Fc receptor-like and mucin-like protein 1</fullName>
    </alternativeName>
</protein>
<keyword id="KW-0963">Cytoplasm</keyword>
<keyword id="KW-0221">Differentiation</keyword>
<keyword id="KW-1015">Disulfide bond</keyword>
<keyword id="KW-0393">Immunoglobulin domain</keyword>
<keyword id="KW-1185">Reference proteome</keyword>
<keyword id="KW-0677">Repeat</keyword>
<keyword id="KW-0732">Signal</keyword>
<sequence>MKLSCMLIEWALYVCPAVLLATQMSLAASLETLKCEGPVSTEHSSCLAATEEDEGDDDMARSGEADFRFKGYTFSKPFHLIVSYDWLILQGPATSIFEGDTLVLHCRAWQDWPLTQVIFYREGSALGPPGSKSEFSIAVARKSDSGHYHCSGIFRSPGPGSQETASPVAITVQELFAAPVLKALPSSGPQEGGSVTLSCETKLSLQRSASRLLFSFYKDGRSLSSRGISSEFRIPEASEEHSGSYWCEAATEDRQISKQSPELEIRVQALQKPATPETPPPAKAPGPLPLLPTPSDEQPVFSFSDPYLTYRINRLLRQMQDVRILLGHLVMELRNLSAHRKPATTKS</sequence>
<evidence type="ECO:0000250" key="1"/>
<evidence type="ECO:0000250" key="2">
    <source>
        <dbReference type="UniProtKB" id="Q7L513"/>
    </source>
</evidence>
<evidence type="ECO:0000255" key="3">
    <source>
        <dbReference type="PROSITE-ProRule" id="PRU00114"/>
    </source>
</evidence>
<evidence type="ECO:0000256" key="4">
    <source>
        <dbReference type="SAM" id="MobiDB-lite"/>
    </source>
</evidence>
<reference key="1">
    <citation type="journal article" date="2004" name="Nature">
        <title>Genome sequence of the Brown Norway rat yields insights into mammalian evolution.</title>
        <authorList>
            <person name="Gibbs R.A."/>
            <person name="Weinstock G.M."/>
            <person name="Metzker M.L."/>
            <person name="Muzny D.M."/>
            <person name="Sodergren E.J."/>
            <person name="Scherer S."/>
            <person name="Scott G."/>
            <person name="Steffen D."/>
            <person name="Worley K.C."/>
            <person name="Burch P.E."/>
            <person name="Okwuonu G."/>
            <person name="Hines S."/>
            <person name="Lewis L."/>
            <person name="Deramo C."/>
            <person name="Delgado O."/>
            <person name="Dugan-Rocha S."/>
            <person name="Miner G."/>
            <person name="Morgan M."/>
            <person name="Hawes A."/>
            <person name="Gill R."/>
            <person name="Holt R.A."/>
            <person name="Adams M.D."/>
            <person name="Amanatides P.G."/>
            <person name="Baden-Tillson H."/>
            <person name="Barnstead M."/>
            <person name="Chin S."/>
            <person name="Evans C.A."/>
            <person name="Ferriera S."/>
            <person name="Fosler C."/>
            <person name="Glodek A."/>
            <person name="Gu Z."/>
            <person name="Jennings D."/>
            <person name="Kraft C.L."/>
            <person name="Nguyen T."/>
            <person name="Pfannkoch C.M."/>
            <person name="Sitter C."/>
            <person name="Sutton G.G."/>
            <person name="Venter J.C."/>
            <person name="Woodage T."/>
            <person name="Smith D."/>
            <person name="Lee H.-M."/>
            <person name="Gustafson E."/>
            <person name="Cahill P."/>
            <person name="Kana A."/>
            <person name="Doucette-Stamm L."/>
            <person name="Weinstock K."/>
            <person name="Fechtel K."/>
            <person name="Weiss R.B."/>
            <person name="Dunn D.M."/>
            <person name="Green E.D."/>
            <person name="Blakesley R.W."/>
            <person name="Bouffard G.G."/>
            <person name="De Jong P.J."/>
            <person name="Osoegawa K."/>
            <person name="Zhu B."/>
            <person name="Marra M."/>
            <person name="Schein J."/>
            <person name="Bosdet I."/>
            <person name="Fjell C."/>
            <person name="Jones S."/>
            <person name="Krzywinski M."/>
            <person name="Mathewson C."/>
            <person name="Siddiqui A."/>
            <person name="Wye N."/>
            <person name="McPherson J."/>
            <person name="Zhao S."/>
            <person name="Fraser C.M."/>
            <person name="Shetty J."/>
            <person name="Shatsman S."/>
            <person name="Geer K."/>
            <person name="Chen Y."/>
            <person name="Abramzon S."/>
            <person name="Nierman W.C."/>
            <person name="Havlak P.H."/>
            <person name="Chen R."/>
            <person name="Durbin K.J."/>
            <person name="Egan A."/>
            <person name="Ren Y."/>
            <person name="Song X.-Z."/>
            <person name="Li B."/>
            <person name="Liu Y."/>
            <person name="Qin X."/>
            <person name="Cawley S."/>
            <person name="Cooney A.J."/>
            <person name="D'Souza L.M."/>
            <person name="Martin K."/>
            <person name="Wu J.Q."/>
            <person name="Gonzalez-Garay M.L."/>
            <person name="Jackson A.R."/>
            <person name="Kalafus K.J."/>
            <person name="McLeod M.P."/>
            <person name="Milosavljevic A."/>
            <person name="Virk D."/>
            <person name="Volkov A."/>
            <person name="Wheeler D.A."/>
            <person name="Zhang Z."/>
            <person name="Bailey J.A."/>
            <person name="Eichler E.E."/>
            <person name="Tuzun E."/>
            <person name="Birney E."/>
            <person name="Mongin E."/>
            <person name="Ureta-Vidal A."/>
            <person name="Woodwark C."/>
            <person name="Zdobnov E."/>
            <person name="Bork P."/>
            <person name="Suyama M."/>
            <person name="Torrents D."/>
            <person name="Alexandersson M."/>
            <person name="Trask B.J."/>
            <person name="Young J.M."/>
            <person name="Huang H."/>
            <person name="Wang H."/>
            <person name="Xing H."/>
            <person name="Daniels S."/>
            <person name="Gietzen D."/>
            <person name="Schmidt J."/>
            <person name="Stevens K."/>
            <person name="Vitt U."/>
            <person name="Wingrove J."/>
            <person name="Camara F."/>
            <person name="Mar Alba M."/>
            <person name="Abril J.F."/>
            <person name="Guigo R."/>
            <person name="Smit A."/>
            <person name="Dubchak I."/>
            <person name="Rubin E.M."/>
            <person name="Couronne O."/>
            <person name="Poliakov A."/>
            <person name="Huebner N."/>
            <person name="Ganten D."/>
            <person name="Goesele C."/>
            <person name="Hummel O."/>
            <person name="Kreitler T."/>
            <person name="Lee Y.-A."/>
            <person name="Monti J."/>
            <person name="Schulz H."/>
            <person name="Zimdahl H."/>
            <person name="Himmelbauer H."/>
            <person name="Lehrach H."/>
            <person name="Jacob H.J."/>
            <person name="Bromberg S."/>
            <person name="Gullings-Handley J."/>
            <person name="Jensen-Seaman M.I."/>
            <person name="Kwitek A.E."/>
            <person name="Lazar J."/>
            <person name="Pasko D."/>
            <person name="Tonellato P.J."/>
            <person name="Twigger S."/>
            <person name="Ponting C.P."/>
            <person name="Duarte J.M."/>
            <person name="Rice S."/>
            <person name="Goodstadt L."/>
            <person name="Beatson S.A."/>
            <person name="Emes R.D."/>
            <person name="Winter E.E."/>
            <person name="Webber C."/>
            <person name="Brandt P."/>
            <person name="Nyakatura G."/>
            <person name="Adetobi M."/>
            <person name="Chiaromonte F."/>
            <person name="Elnitski L."/>
            <person name="Eswara P."/>
            <person name="Hardison R.C."/>
            <person name="Hou M."/>
            <person name="Kolbe D."/>
            <person name="Makova K."/>
            <person name="Miller W."/>
            <person name="Nekrutenko A."/>
            <person name="Riemer C."/>
            <person name="Schwartz S."/>
            <person name="Taylor J."/>
            <person name="Yang S."/>
            <person name="Zhang Y."/>
            <person name="Lindpaintner K."/>
            <person name="Andrews T.D."/>
            <person name="Caccamo M."/>
            <person name="Clamp M."/>
            <person name="Clarke L."/>
            <person name="Curwen V."/>
            <person name="Durbin R.M."/>
            <person name="Eyras E."/>
            <person name="Searle S.M."/>
            <person name="Cooper G.M."/>
            <person name="Batzoglou S."/>
            <person name="Brudno M."/>
            <person name="Sidow A."/>
            <person name="Stone E.A."/>
            <person name="Payseur B.A."/>
            <person name="Bourque G."/>
            <person name="Lopez-Otin C."/>
            <person name="Puente X.S."/>
            <person name="Chakrabarti K."/>
            <person name="Chatterji S."/>
            <person name="Dewey C."/>
            <person name="Pachter L."/>
            <person name="Bray N."/>
            <person name="Yap V.B."/>
            <person name="Caspi A."/>
            <person name="Tesler G."/>
            <person name="Pevzner P.A."/>
            <person name="Haussler D."/>
            <person name="Roskin K.M."/>
            <person name="Baertsch R."/>
            <person name="Clawson H."/>
            <person name="Furey T.S."/>
            <person name="Hinrichs A.S."/>
            <person name="Karolchik D."/>
            <person name="Kent W.J."/>
            <person name="Rosenbloom K.R."/>
            <person name="Trumbower H."/>
            <person name="Weirauch M."/>
            <person name="Cooper D.N."/>
            <person name="Stenson P.D."/>
            <person name="Ma B."/>
            <person name="Brent M."/>
            <person name="Arumugam M."/>
            <person name="Shteynberg D."/>
            <person name="Copley R.R."/>
            <person name="Taylor M.S."/>
            <person name="Riethman H."/>
            <person name="Mudunuri U."/>
            <person name="Peterson J."/>
            <person name="Guyer M."/>
            <person name="Felsenfeld A."/>
            <person name="Old S."/>
            <person name="Mockrin S."/>
            <person name="Collins F.S."/>
        </authorList>
    </citation>
    <scope>NUCLEOTIDE SEQUENCE [LARGE SCALE GENOMIC DNA]</scope>
    <source>
        <strain>Brown Norway</strain>
    </source>
</reference>
<reference key="2">
    <citation type="journal article" date="2004" name="Genome Res.">
        <title>The status, quality, and expansion of the NIH full-length cDNA project: the Mammalian Gene Collection (MGC).</title>
        <authorList>
            <consortium name="The MGC Project Team"/>
        </authorList>
    </citation>
    <scope>NUCLEOTIDE SEQUENCE [LARGE SCALE MRNA] OF 2-347</scope>
    <source>
        <tissue>Spleen</tissue>
    </source>
</reference>
<gene>
    <name type="primary">Fcrla</name>
    <name type="synonym">Fcrlm1</name>
</gene>
<accession>Q3B8P2</accession>
<organism>
    <name type="scientific">Rattus norvegicus</name>
    <name type="common">Rat</name>
    <dbReference type="NCBI Taxonomy" id="10116"/>
    <lineage>
        <taxon>Eukaryota</taxon>
        <taxon>Metazoa</taxon>
        <taxon>Chordata</taxon>
        <taxon>Craniata</taxon>
        <taxon>Vertebrata</taxon>
        <taxon>Euteleostomi</taxon>
        <taxon>Mammalia</taxon>
        <taxon>Eutheria</taxon>
        <taxon>Euarchontoglires</taxon>
        <taxon>Glires</taxon>
        <taxon>Rodentia</taxon>
        <taxon>Myomorpha</taxon>
        <taxon>Muroidea</taxon>
        <taxon>Muridae</taxon>
        <taxon>Murinae</taxon>
        <taxon>Rattus</taxon>
    </lineage>
</organism>
<feature type="signal peptide" evidence="1">
    <location>
        <begin position="1"/>
        <end position="27"/>
    </location>
</feature>
<feature type="chain" id="PRO_0000227937" description="Fc receptor-like A">
    <location>
        <begin position="28"/>
        <end position="347"/>
    </location>
</feature>
<feature type="domain" description="Ig-like C2-type 1">
    <location>
        <begin position="77"/>
        <end position="166"/>
    </location>
</feature>
<feature type="domain" description="Ig-like C2-type 2">
    <location>
        <begin position="179"/>
        <end position="257"/>
    </location>
</feature>
<feature type="region of interest" description="Disordered" evidence="4">
    <location>
        <begin position="272"/>
        <end position="296"/>
    </location>
</feature>
<feature type="compositionally biased region" description="Pro residues" evidence="4">
    <location>
        <begin position="276"/>
        <end position="292"/>
    </location>
</feature>
<feature type="disulfide bond" evidence="3">
    <location>
        <begin position="106"/>
        <end position="150"/>
    </location>
</feature>
<feature type="disulfide bond" evidence="3">
    <location>
        <begin position="199"/>
        <end position="247"/>
    </location>
</feature>
<name>FCRLA_RAT</name>
<dbReference type="EMBL" id="AABR03087291">
    <property type="status" value="NOT_ANNOTATED_CDS"/>
    <property type="molecule type" value="Genomic_DNA"/>
</dbReference>
<dbReference type="EMBL" id="BC105902">
    <property type="protein sequence ID" value="AAI05903.1"/>
    <property type="molecule type" value="mRNA"/>
</dbReference>
<dbReference type="RefSeq" id="NP_001094152.1">
    <property type="nucleotide sequence ID" value="NM_001100682.1"/>
</dbReference>
<dbReference type="SMR" id="Q3B8P2"/>
<dbReference type="FunCoup" id="Q3B8P2">
    <property type="interactions" value="38"/>
</dbReference>
<dbReference type="STRING" id="10116.ENSRNOP00000074778"/>
<dbReference type="GlyGen" id="Q3B8P2">
    <property type="glycosylation" value="1 site"/>
</dbReference>
<dbReference type="iPTMnet" id="Q3B8P2"/>
<dbReference type="PhosphoSitePlus" id="Q3B8P2"/>
<dbReference type="PaxDb" id="10116-ENSRNOP00000004183"/>
<dbReference type="Ensembl" id="ENSRNOT00000004183.7">
    <property type="protein sequence ID" value="ENSRNOP00000004183.5"/>
    <property type="gene ID" value="ENSRNOG00000003136.7"/>
</dbReference>
<dbReference type="GeneID" id="304965"/>
<dbReference type="KEGG" id="rno:304965"/>
<dbReference type="UCSC" id="RGD:1306176">
    <property type="organism name" value="rat"/>
</dbReference>
<dbReference type="AGR" id="RGD:1306176"/>
<dbReference type="CTD" id="84824"/>
<dbReference type="RGD" id="1306176">
    <property type="gene designation" value="Fcrla"/>
</dbReference>
<dbReference type="eggNOG" id="ENOG502T149">
    <property type="taxonomic scope" value="Eukaryota"/>
</dbReference>
<dbReference type="GeneTree" id="ENSGT01050000244808"/>
<dbReference type="HOGENOM" id="CLU_063170_0_0_1"/>
<dbReference type="InParanoid" id="Q3B8P2"/>
<dbReference type="OMA" id="HHQMGIL"/>
<dbReference type="OrthoDB" id="8941709at2759"/>
<dbReference type="PhylomeDB" id="Q3B8P2"/>
<dbReference type="TreeFam" id="TF335097"/>
<dbReference type="PRO" id="PR:Q3B8P2"/>
<dbReference type="Proteomes" id="UP000002494">
    <property type="component" value="Chromosome 13"/>
</dbReference>
<dbReference type="Bgee" id="ENSRNOG00000003136">
    <property type="expression patterns" value="Expressed in spleen and 15 other cell types or tissues"/>
</dbReference>
<dbReference type="ExpressionAtlas" id="Q3B8P2">
    <property type="expression patterns" value="baseline and differential"/>
</dbReference>
<dbReference type="GO" id="GO:0005737">
    <property type="term" value="C:cytoplasm"/>
    <property type="evidence" value="ECO:0000266"/>
    <property type="project" value="RGD"/>
</dbReference>
<dbReference type="GO" id="GO:0009897">
    <property type="term" value="C:external side of plasma membrane"/>
    <property type="evidence" value="ECO:0000318"/>
    <property type="project" value="GO_Central"/>
</dbReference>
<dbReference type="GO" id="GO:0004888">
    <property type="term" value="F:transmembrane signaling receptor activity"/>
    <property type="evidence" value="ECO:0000318"/>
    <property type="project" value="GO_Central"/>
</dbReference>
<dbReference type="GO" id="GO:0030154">
    <property type="term" value="P:cell differentiation"/>
    <property type="evidence" value="ECO:0007669"/>
    <property type="project" value="UniProtKB-KW"/>
</dbReference>
<dbReference type="GO" id="GO:0007166">
    <property type="term" value="P:cell surface receptor signaling pathway"/>
    <property type="evidence" value="ECO:0000318"/>
    <property type="project" value="GO_Central"/>
</dbReference>
<dbReference type="GO" id="GO:0006955">
    <property type="term" value="P:immune response"/>
    <property type="evidence" value="ECO:0000318"/>
    <property type="project" value="GO_Central"/>
</dbReference>
<dbReference type="FunFam" id="2.60.40.10:FF:000651">
    <property type="entry name" value="Fc receptor like 1"/>
    <property type="match status" value="1"/>
</dbReference>
<dbReference type="FunFam" id="2.60.40.10:FF:000217">
    <property type="entry name" value="High affinity immunoglobulin gamma Fc receptor I"/>
    <property type="match status" value="1"/>
</dbReference>
<dbReference type="Gene3D" id="2.60.40.10">
    <property type="entry name" value="Immunoglobulins"/>
    <property type="match status" value="2"/>
</dbReference>
<dbReference type="InterPro" id="IPR007110">
    <property type="entry name" value="Ig-like_dom"/>
</dbReference>
<dbReference type="InterPro" id="IPR036179">
    <property type="entry name" value="Ig-like_dom_sf"/>
</dbReference>
<dbReference type="InterPro" id="IPR013783">
    <property type="entry name" value="Ig-like_fold"/>
</dbReference>
<dbReference type="InterPro" id="IPR050488">
    <property type="entry name" value="Ig_Fc_receptor"/>
</dbReference>
<dbReference type="InterPro" id="IPR003599">
    <property type="entry name" value="Ig_sub"/>
</dbReference>
<dbReference type="InterPro" id="IPR003598">
    <property type="entry name" value="Ig_sub2"/>
</dbReference>
<dbReference type="PANTHER" id="PTHR11481:SF71">
    <property type="entry name" value="FC RECEPTOR-LIKE A"/>
    <property type="match status" value="1"/>
</dbReference>
<dbReference type="PANTHER" id="PTHR11481">
    <property type="entry name" value="IMMUNOGLOBULIN FC RECEPTOR"/>
    <property type="match status" value="1"/>
</dbReference>
<dbReference type="Pfam" id="PF13895">
    <property type="entry name" value="Ig_2"/>
    <property type="match status" value="2"/>
</dbReference>
<dbReference type="SMART" id="SM00409">
    <property type="entry name" value="IG"/>
    <property type="match status" value="2"/>
</dbReference>
<dbReference type="SMART" id="SM00408">
    <property type="entry name" value="IGc2"/>
    <property type="match status" value="2"/>
</dbReference>
<dbReference type="SUPFAM" id="SSF48726">
    <property type="entry name" value="Immunoglobulin"/>
    <property type="match status" value="2"/>
</dbReference>
<dbReference type="PROSITE" id="PS50835">
    <property type="entry name" value="IG_LIKE"/>
    <property type="match status" value="2"/>
</dbReference>
<comment type="function">
    <text>May be implicated in B-cell differentiation and lymphomagenesis.</text>
</comment>
<comment type="subunit">
    <text evidence="1">Monomer or homodimer; disulfide-linked.</text>
</comment>
<comment type="subcellular location">
    <subcellularLocation>
        <location evidence="2">Cytoplasm</location>
    </subcellularLocation>
    <text evidence="2">Seems not to be secreted.</text>
</comment>